<comment type="function">
    <text evidence="1">Binds to 23S rRNA. One of the proteins that surrounds the polypeptide exit tunnel on the outside of the ribosome.</text>
</comment>
<comment type="subunit">
    <text evidence="1 2">Part of the 50S ribosomal subunit (PubMed:32555463). Contacts protein L29.</text>
</comment>
<comment type="similarity">
    <text evidence="1">Belongs to the universal ribosomal protein uL23 family.</text>
</comment>
<dbReference type="EMBL" id="AP006878">
    <property type="protein sequence ID" value="BAD85729.1"/>
    <property type="molecule type" value="Genomic_DNA"/>
</dbReference>
<dbReference type="RefSeq" id="WP_011250491.1">
    <property type="nucleotide sequence ID" value="NC_006624.1"/>
</dbReference>
<dbReference type="PDB" id="6SKF">
    <property type="method" value="EM"/>
    <property type="resolution" value="2.95 A"/>
    <property type="chains" value="BW=1-86"/>
</dbReference>
<dbReference type="PDB" id="6SKG">
    <property type="method" value="EM"/>
    <property type="resolution" value="2.65 A"/>
    <property type="chains" value="BW=1-86"/>
</dbReference>
<dbReference type="PDB" id="6TH6">
    <property type="method" value="EM"/>
    <property type="resolution" value="2.55 A"/>
    <property type="chains" value="BW=1-86"/>
</dbReference>
<dbReference type="PDBsum" id="6SKF"/>
<dbReference type="PDBsum" id="6SKG"/>
<dbReference type="PDBsum" id="6TH6"/>
<dbReference type="EMDB" id="EMD-10223"/>
<dbReference type="EMDB" id="EMD-10224"/>
<dbReference type="EMDB" id="EMD-10503"/>
<dbReference type="SMR" id="Q5JDH1"/>
<dbReference type="FunCoup" id="Q5JDH1">
    <property type="interactions" value="147"/>
</dbReference>
<dbReference type="STRING" id="69014.TK1540"/>
<dbReference type="EnsemblBacteria" id="BAD85729">
    <property type="protein sequence ID" value="BAD85729"/>
    <property type="gene ID" value="TK1540"/>
</dbReference>
<dbReference type="GeneID" id="78448068"/>
<dbReference type="KEGG" id="tko:TK1540"/>
<dbReference type="PATRIC" id="fig|69014.16.peg.1500"/>
<dbReference type="eggNOG" id="arCOG04072">
    <property type="taxonomic scope" value="Archaea"/>
</dbReference>
<dbReference type="HOGENOM" id="CLU_037562_4_2_2"/>
<dbReference type="InParanoid" id="Q5JDH1"/>
<dbReference type="OrthoDB" id="7751at2157"/>
<dbReference type="PhylomeDB" id="Q5JDH1"/>
<dbReference type="Proteomes" id="UP000000536">
    <property type="component" value="Chromosome"/>
</dbReference>
<dbReference type="GO" id="GO:0022625">
    <property type="term" value="C:cytosolic large ribosomal subunit"/>
    <property type="evidence" value="ECO:0000318"/>
    <property type="project" value="GO_Central"/>
</dbReference>
<dbReference type="GO" id="GO:0019843">
    <property type="term" value="F:rRNA binding"/>
    <property type="evidence" value="ECO:0007669"/>
    <property type="project" value="UniProtKB-UniRule"/>
</dbReference>
<dbReference type="GO" id="GO:0003735">
    <property type="term" value="F:structural constituent of ribosome"/>
    <property type="evidence" value="ECO:0000318"/>
    <property type="project" value="GO_Central"/>
</dbReference>
<dbReference type="GO" id="GO:0006412">
    <property type="term" value="P:translation"/>
    <property type="evidence" value="ECO:0007669"/>
    <property type="project" value="UniProtKB-UniRule"/>
</dbReference>
<dbReference type="FunFam" id="3.30.70.330:FF:001084">
    <property type="entry name" value="50S ribosomal protein L23"/>
    <property type="match status" value="1"/>
</dbReference>
<dbReference type="Gene3D" id="3.30.70.330">
    <property type="match status" value="1"/>
</dbReference>
<dbReference type="HAMAP" id="MF_01369_A">
    <property type="entry name" value="Ribosomal_uL23_A"/>
    <property type="match status" value="1"/>
</dbReference>
<dbReference type="HAMAP" id="MF_01369_B">
    <property type="entry name" value="Ribosomal_uL23_B"/>
    <property type="match status" value="1"/>
</dbReference>
<dbReference type="InterPro" id="IPR012677">
    <property type="entry name" value="Nucleotide-bd_a/b_plait_sf"/>
</dbReference>
<dbReference type="InterPro" id="IPR019985">
    <property type="entry name" value="Ribosomal_uL23"/>
</dbReference>
<dbReference type="InterPro" id="IPR013025">
    <property type="entry name" value="Ribosomal_uL23-like"/>
</dbReference>
<dbReference type="InterPro" id="IPR012678">
    <property type="entry name" value="Ribosomal_uL23/eL15/eS24_sf"/>
</dbReference>
<dbReference type="InterPro" id="IPR001014">
    <property type="entry name" value="Ribosomal_uL23_CS"/>
</dbReference>
<dbReference type="NCBIfam" id="NF011118">
    <property type="entry name" value="PRK14548.1"/>
    <property type="match status" value="1"/>
</dbReference>
<dbReference type="NCBIfam" id="TIGR03636">
    <property type="entry name" value="uL23_arch"/>
    <property type="match status" value="1"/>
</dbReference>
<dbReference type="PANTHER" id="PTHR11620">
    <property type="entry name" value="60S RIBOSOMAL PROTEIN L23A"/>
    <property type="match status" value="1"/>
</dbReference>
<dbReference type="Pfam" id="PF00276">
    <property type="entry name" value="Ribosomal_L23"/>
    <property type="match status" value="1"/>
</dbReference>
<dbReference type="SUPFAM" id="SSF54189">
    <property type="entry name" value="Ribosomal proteins S24e, L23 and L15e"/>
    <property type="match status" value="1"/>
</dbReference>
<dbReference type="PROSITE" id="PS00050">
    <property type="entry name" value="RIBOSOMAL_L23"/>
    <property type="match status" value="1"/>
</dbReference>
<gene>
    <name evidence="1" type="primary">rpl23</name>
    <name type="ordered locus">TK1540</name>
</gene>
<feature type="chain" id="PRO_0000272954" description="Large ribosomal subunit protein uL23">
    <location>
        <begin position="1"/>
        <end position="86"/>
    </location>
</feature>
<reference key="1">
    <citation type="journal article" date="2005" name="Genome Res.">
        <title>Complete genome sequence of the hyperthermophilic archaeon Thermococcus kodakaraensis KOD1 and comparison with Pyrococcus genomes.</title>
        <authorList>
            <person name="Fukui T."/>
            <person name="Atomi H."/>
            <person name="Kanai T."/>
            <person name="Matsumi R."/>
            <person name="Fujiwara S."/>
            <person name="Imanaka T."/>
        </authorList>
    </citation>
    <scope>NUCLEOTIDE SEQUENCE [LARGE SCALE GENOMIC DNA]</scope>
    <source>
        <strain>ATCC BAA-918 / JCM 12380 / KOD1</strain>
    </source>
</reference>
<reference evidence="4 5 6" key="2">
    <citation type="journal article" date="2020" name="Nature">
        <title>Dynamic RNA acetylation revealed by quantitative cross-evolutionary mapping.</title>
        <authorList>
            <person name="Sas-Chen A."/>
            <person name="Thomas J.M."/>
            <person name="Matzov D."/>
            <person name="Taoka M."/>
            <person name="Nance K.D."/>
            <person name="Nir R."/>
            <person name="Bryson K.M."/>
            <person name="Shachar R."/>
            <person name="Liman G.L.S."/>
            <person name="Burkhart B.W."/>
            <person name="Gamage S.T."/>
            <person name="Nobe Y."/>
            <person name="Briney C.A."/>
            <person name="Levy M.J."/>
            <person name="Fuchs R.T."/>
            <person name="Robb G.B."/>
            <person name="Hartmann J."/>
            <person name="Sharma S."/>
            <person name="Lin Q."/>
            <person name="Florens L."/>
            <person name="Washburn M.P."/>
            <person name="Isobe T."/>
            <person name="Santangelo T.J."/>
            <person name="Shalev-Benami M."/>
            <person name="Meier J.L."/>
            <person name="Schwartz S."/>
        </authorList>
    </citation>
    <scope>STRUCTURE BY ELECTRON MICROSCOPY (2.55 ANGSTROMS) IN 70S RIBOSOME</scope>
    <scope>SUBUNIT</scope>
    <source>
        <strain>ATCC BAA-918 / TS559</strain>
    </source>
</reference>
<proteinExistence type="evidence at protein level"/>
<name>RL23_THEKO</name>
<sequence length="86" mass="9898">MDPYKVIIRPLVTEKAVSLIERENKLTFIVDRRATKQDIKRAVEEMFNVKVAKVNTLVTMKGEKKAYVKLKPEYDASEIAARLGLF</sequence>
<organism>
    <name type="scientific">Thermococcus kodakarensis (strain ATCC BAA-918 / JCM 12380 / KOD1)</name>
    <name type="common">Pyrococcus kodakaraensis (strain KOD1)</name>
    <dbReference type="NCBI Taxonomy" id="69014"/>
    <lineage>
        <taxon>Archaea</taxon>
        <taxon>Methanobacteriati</taxon>
        <taxon>Methanobacteriota</taxon>
        <taxon>Thermococci</taxon>
        <taxon>Thermococcales</taxon>
        <taxon>Thermococcaceae</taxon>
        <taxon>Thermococcus</taxon>
    </lineage>
</organism>
<evidence type="ECO:0000255" key="1">
    <source>
        <dbReference type="HAMAP-Rule" id="MF_01369"/>
    </source>
</evidence>
<evidence type="ECO:0000269" key="2">
    <source>
    </source>
</evidence>
<evidence type="ECO:0000305" key="3"/>
<evidence type="ECO:0007744" key="4">
    <source>
        <dbReference type="PDB" id="6SKF"/>
    </source>
</evidence>
<evidence type="ECO:0007744" key="5">
    <source>
        <dbReference type="PDB" id="6SKG"/>
    </source>
</evidence>
<evidence type="ECO:0007744" key="6">
    <source>
        <dbReference type="PDB" id="6TH6"/>
    </source>
</evidence>
<protein>
    <recommendedName>
        <fullName evidence="1">Large ribosomal subunit protein uL23</fullName>
    </recommendedName>
    <alternativeName>
        <fullName evidence="3">50S ribosomal protein L23</fullName>
    </alternativeName>
</protein>
<accession>Q5JDH1</accession>
<keyword id="KW-0002">3D-structure</keyword>
<keyword id="KW-1185">Reference proteome</keyword>
<keyword id="KW-0687">Ribonucleoprotein</keyword>
<keyword id="KW-0689">Ribosomal protein</keyword>
<keyword id="KW-0694">RNA-binding</keyword>
<keyword id="KW-0699">rRNA-binding</keyword>